<comment type="function">
    <text evidence="1">RuBisCO catalyzes two reactions: the carboxylation of D-ribulose 1,5-bisphosphate, the primary event in carbon dioxide fixation, as well as the oxidative fragmentation of the pentose substrate. Both reactions occur simultaneously and in competition at the same active site.</text>
</comment>
<comment type="catalytic activity">
    <reaction evidence="1">
        <text>2 (2R)-3-phosphoglycerate + 2 H(+) = D-ribulose 1,5-bisphosphate + CO2 + H2O</text>
        <dbReference type="Rhea" id="RHEA:23124"/>
        <dbReference type="ChEBI" id="CHEBI:15377"/>
        <dbReference type="ChEBI" id="CHEBI:15378"/>
        <dbReference type="ChEBI" id="CHEBI:16526"/>
        <dbReference type="ChEBI" id="CHEBI:57870"/>
        <dbReference type="ChEBI" id="CHEBI:58272"/>
        <dbReference type="EC" id="4.1.1.39"/>
    </reaction>
</comment>
<comment type="catalytic activity">
    <reaction evidence="1">
        <text>D-ribulose 1,5-bisphosphate + O2 = 2-phosphoglycolate + (2R)-3-phosphoglycerate + 2 H(+)</text>
        <dbReference type="Rhea" id="RHEA:36631"/>
        <dbReference type="ChEBI" id="CHEBI:15378"/>
        <dbReference type="ChEBI" id="CHEBI:15379"/>
        <dbReference type="ChEBI" id="CHEBI:57870"/>
        <dbReference type="ChEBI" id="CHEBI:58033"/>
        <dbReference type="ChEBI" id="CHEBI:58272"/>
    </reaction>
</comment>
<comment type="cofactor">
    <cofactor evidence="1">
        <name>Mg(2+)</name>
        <dbReference type="ChEBI" id="CHEBI:18420"/>
    </cofactor>
    <text evidence="1">Binds 1 Mg(2+) ion per subunit.</text>
</comment>
<comment type="subunit">
    <text evidence="1">Heterohexadecamer of 8 large chains and 8 small chains.</text>
</comment>
<comment type="miscellaneous">
    <text evidence="1">The basic functional RuBisCO is composed of a large chain homodimer in a 'head-to-tail' conformation. In form I RuBisCO this homodimer is arranged in a barrel-like tetramer with the small subunits forming a tetrameric 'cap' on each end of the 'barrel'.</text>
</comment>
<comment type="similarity">
    <text evidence="1">Belongs to the RuBisCO large chain family. Type I subfamily.</text>
</comment>
<proteinExistence type="inferred from homology"/>
<organism>
    <name type="scientific">Nitrosococcus oceani (strain ATCC 19707 / BCRC 17464 / JCM 30415 / NCIMB 11848 / C-107)</name>
    <dbReference type="NCBI Taxonomy" id="323261"/>
    <lineage>
        <taxon>Bacteria</taxon>
        <taxon>Pseudomonadati</taxon>
        <taxon>Pseudomonadota</taxon>
        <taxon>Gammaproteobacteria</taxon>
        <taxon>Chromatiales</taxon>
        <taxon>Chromatiaceae</taxon>
        <taxon>Nitrosococcus</taxon>
    </lineage>
</organism>
<protein>
    <recommendedName>
        <fullName evidence="1">Ribulose bisphosphate carboxylase large chain</fullName>
        <shortName evidence="1">RuBisCO large subunit</shortName>
        <ecNumber evidence="1">4.1.1.39</ecNumber>
    </recommendedName>
</protein>
<evidence type="ECO:0000255" key="1">
    <source>
        <dbReference type="HAMAP-Rule" id="MF_01338"/>
    </source>
</evidence>
<reference key="1">
    <citation type="journal article" date="2006" name="Appl. Environ. Microbiol.">
        <title>Complete genome sequence of the marine, chemolithoautotrophic, ammonia-oxidizing bacterium Nitrosococcus oceani ATCC 19707.</title>
        <authorList>
            <person name="Klotz M.G."/>
            <person name="Arp D.J."/>
            <person name="Chain P.S.G."/>
            <person name="El-Sheikh A.F."/>
            <person name="Hauser L.J."/>
            <person name="Hommes N.G."/>
            <person name="Larimer F.W."/>
            <person name="Malfatti S.A."/>
            <person name="Norton J.M."/>
            <person name="Poret-Peterson A.T."/>
            <person name="Vergez L.M."/>
            <person name="Ward B.B."/>
        </authorList>
    </citation>
    <scope>NUCLEOTIDE SEQUENCE [LARGE SCALE GENOMIC DNA]</scope>
    <source>
        <strain>ATCC 19707 / BCRC 17464 / JCM 30415 / NCIMB 11848 / C-107</strain>
    </source>
</reference>
<accession>Q3JE87</accession>
<feature type="chain" id="PRO_0000251450" description="Ribulose bisphosphate carboxylase large chain">
    <location>
        <begin position="1"/>
        <end position="492"/>
    </location>
</feature>
<feature type="active site" description="Proton acceptor" evidence="1">
    <location>
        <position position="183"/>
    </location>
</feature>
<feature type="active site" description="Proton acceptor" evidence="1">
    <location>
        <position position="301"/>
    </location>
</feature>
<feature type="binding site" description="in homodimeric partner" evidence="1">
    <location>
        <position position="131"/>
    </location>
    <ligand>
        <name>substrate</name>
    </ligand>
</feature>
<feature type="binding site" evidence="1">
    <location>
        <position position="181"/>
    </location>
    <ligand>
        <name>substrate</name>
    </ligand>
</feature>
<feature type="binding site" evidence="1">
    <location>
        <position position="185"/>
    </location>
    <ligand>
        <name>substrate</name>
    </ligand>
</feature>
<feature type="binding site" description="via carbamate group" evidence="1">
    <location>
        <position position="209"/>
    </location>
    <ligand>
        <name>Mg(2+)</name>
        <dbReference type="ChEBI" id="CHEBI:18420"/>
    </ligand>
</feature>
<feature type="binding site" evidence="1">
    <location>
        <position position="211"/>
    </location>
    <ligand>
        <name>Mg(2+)</name>
        <dbReference type="ChEBI" id="CHEBI:18420"/>
    </ligand>
</feature>
<feature type="binding site" evidence="1">
    <location>
        <position position="212"/>
    </location>
    <ligand>
        <name>Mg(2+)</name>
        <dbReference type="ChEBI" id="CHEBI:18420"/>
    </ligand>
</feature>
<feature type="binding site" evidence="1">
    <location>
        <position position="302"/>
    </location>
    <ligand>
        <name>substrate</name>
    </ligand>
</feature>
<feature type="binding site" evidence="1">
    <location>
        <position position="334"/>
    </location>
    <ligand>
        <name>substrate</name>
    </ligand>
</feature>
<feature type="binding site" evidence="1">
    <location>
        <position position="386"/>
    </location>
    <ligand>
        <name>substrate</name>
    </ligand>
</feature>
<feature type="site" description="Transition state stabilizer" evidence="1">
    <location>
        <position position="341"/>
    </location>
</feature>
<feature type="modified residue" description="N6-carboxylysine" evidence="1">
    <location>
        <position position="209"/>
    </location>
</feature>
<gene>
    <name evidence="1" type="primary">cbbL</name>
    <name type="ordered locus">Noc_0333</name>
</gene>
<sequence length="492" mass="54381">MGKSETIAEGKDRYQAGVIPYKKMGYWEPDYQPKDTDIIAMFRITPQPGVDPEEAAAAVAGESSTATWTVVWTDRLTDCELYRAKAYRADLVPNTGEGTKNEAQYFAYIAYDLDLFEPGSIANLTASIIGNVFGFKAVKALRLEDMRIPVAYLKTFQGPATGVVVERERLDKFGRPLLGATTKPKLGLSGRNYGRVVYEALKGGLDFVKDDENINSQPFMHWRDRFLYCMEAVNKASAATGEVKGHYLNVTAATMEDMYERAEFAKSLGSVIIMIDLVVGYTAIQSMAKWARKNDMILHLHRAGNSTYSRQKNHGMNFRVICKWMRMAGVDHIHAGTVVGKLEGDPLMIKGFYDTLLDSHTPTSLEHGLFFDQDWASLNKVMPVASGGIHAGQMHQLIQYLGEDVILQFGGGTIGHPQGIQAGAVANRVALEAMILARNEGRDYVKEGPQILQDAAKWCSPLKAALDTWKDVTFNYESTDTADFVPTATASV</sequence>
<name>RBL_NITOC</name>
<keyword id="KW-0113">Calvin cycle</keyword>
<keyword id="KW-0120">Carbon dioxide fixation</keyword>
<keyword id="KW-0456">Lyase</keyword>
<keyword id="KW-0460">Magnesium</keyword>
<keyword id="KW-0479">Metal-binding</keyword>
<keyword id="KW-0503">Monooxygenase</keyword>
<keyword id="KW-0560">Oxidoreductase</keyword>
<keyword id="KW-1185">Reference proteome</keyword>
<dbReference type="EC" id="4.1.1.39" evidence="1"/>
<dbReference type="EMBL" id="CP000127">
    <property type="protein sequence ID" value="ABA56859.1"/>
    <property type="molecule type" value="Genomic_DNA"/>
</dbReference>
<dbReference type="RefSeq" id="WP_011330306.1">
    <property type="nucleotide sequence ID" value="NC_007484.1"/>
</dbReference>
<dbReference type="SMR" id="Q3JE87"/>
<dbReference type="STRING" id="323261.Noc_0333"/>
<dbReference type="KEGG" id="noc:Noc_0333"/>
<dbReference type="eggNOG" id="COG1850">
    <property type="taxonomic scope" value="Bacteria"/>
</dbReference>
<dbReference type="HOGENOM" id="CLU_031450_2_0_6"/>
<dbReference type="InParanoid" id="Q3JE87"/>
<dbReference type="Proteomes" id="UP000006838">
    <property type="component" value="Chromosome"/>
</dbReference>
<dbReference type="GO" id="GO:0000287">
    <property type="term" value="F:magnesium ion binding"/>
    <property type="evidence" value="ECO:0007669"/>
    <property type="project" value="UniProtKB-UniRule"/>
</dbReference>
<dbReference type="GO" id="GO:0004497">
    <property type="term" value="F:monooxygenase activity"/>
    <property type="evidence" value="ECO:0007669"/>
    <property type="project" value="UniProtKB-KW"/>
</dbReference>
<dbReference type="GO" id="GO:0016984">
    <property type="term" value="F:ribulose-bisphosphate carboxylase activity"/>
    <property type="evidence" value="ECO:0007669"/>
    <property type="project" value="UniProtKB-UniRule"/>
</dbReference>
<dbReference type="GO" id="GO:0019253">
    <property type="term" value="P:reductive pentose-phosphate cycle"/>
    <property type="evidence" value="ECO:0007669"/>
    <property type="project" value="UniProtKB-UniRule"/>
</dbReference>
<dbReference type="CDD" id="cd08212">
    <property type="entry name" value="RuBisCO_large_I"/>
    <property type="match status" value="1"/>
</dbReference>
<dbReference type="Gene3D" id="3.20.20.110">
    <property type="entry name" value="Ribulose bisphosphate carboxylase, large subunit, C-terminal domain"/>
    <property type="match status" value="1"/>
</dbReference>
<dbReference type="Gene3D" id="3.30.70.150">
    <property type="entry name" value="RuBisCO large subunit, N-terminal domain"/>
    <property type="match status" value="1"/>
</dbReference>
<dbReference type="HAMAP" id="MF_01338">
    <property type="entry name" value="RuBisCO_L_type1"/>
    <property type="match status" value="1"/>
</dbReference>
<dbReference type="InterPro" id="IPR033966">
    <property type="entry name" value="RuBisCO"/>
</dbReference>
<dbReference type="InterPro" id="IPR020878">
    <property type="entry name" value="RuBisCo_large_chain_AS"/>
</dbReference>
<dbReference type="InterPro" id="IPR000685">
    <property type="entry name" value="RuBisCO_lsu_C"/>
</dbReference>
<dbReference type="InterPro" id="IPR036376">
    <property type="entry name" value="RuBisCO_lsu_C_sf"/>
</dbReference>
<dbReference type="InterPro" id="IPR017443">
    <property type="entry name" value="RuBisCO_lsu_fd_N"/>
</dbReference>
<dbReference type="InterPro" id="IPR036422">
    <property type="entry name" value="RuBisCO_lsu_N_sf"/>
</dbReference>
<dbReference type="InterPro" id="IPR020888">
    <property type="entry name" value="RuBisCO_lsuI"/>
</dbReference>
<dbReference type="NCBIfam" id="NF003252">
    <property type="entry name" value="PRK04208.1"/>
    <property type="match status" value="1"/>
</dbReference>
<dbReference type="PANTHER" id="PTHR42704">
    <property type="entry name" value="RIBULOSE BISPHOSPHATE CARBOXYLASE"/>
    <property type="match status" value="1"/>
</dbReference>
<dbReference type="PANTHER" id="PTHR42704:SF17">
    <property type="entry name" value="RIBULOSE BISPHOSPHATE CARBOXYLASE LARGE CHAIN"/>
    <property type="match status" value="1"/>
</dbReference>
<dbReference type="Pfam" id="PF00016">
    <property type="entry name" value="RuBisCO_large"/>
    <property type="match status" value="1"/>
</dbReference>
<dbReference type="Pfam" id="PF02788">
    <property type="entry name" value="RuBisCO_large_N"/>
    <property type="match status" value="1"/>
</dbReference>
<dbReference type="SFLD" id="SFLDG01052">
    <property type="entry name" value="RuBisCO"/>
    <property type="match status" value="1"/>
</dbReference>
<dbReference type="SFLD" id="SFLDS00014">
    <property type="entry name" value="RuBisCO"/>
    <property type="match status" value="1"/>
</dbReference>
<dbReference type="SFLD" id="SFLDG00301">
    <property type="entry name" value="RuBisCO-like_proteins"/>
    <property type="match status" value="1"/>
</dbReference>
<dbReference type="SUPFAM" id="SSF51649">
    <property type="entry name" value="RuBisCo, C-terminal domain"/>
    <property type="match status" value="1"/>
</dbReference>
<dbReference type="SUPFAM" id="SSF54966">
    <property type="entry name" value="RuBisCO, large subunit, small (N-terminal) domain"/>
    <property type="match status" value="1"/>
</dbReference>
<dbReference type="PROSITE" id="PS00157">
    <property type="entry name" value="RUBISCO_LARGE"/>
    <property type="match status" value="1"/>
</dbReference>